<organism>
    <name type="scientific">Lachancea thermotolerans (strain ATCC 56472 / CBS 6340 / NRRL Y-8284)</name>
    <name type="common">Yeast</name>
    <name type="synonym">Kluyveromyces thermotolerans</name>
    <dbReference type="NCBI Taxonomy" id="559295"/>
    <lineage>
        <taxon>Eukaryota</taxon>
        <taxon>Fungi</taxon>
        <taxon>Dikarya</taxon>
        <taxon>Ascomycota</taxon>
        <taxon>Saccharomycotina</taxon>
        <taxon>Saccharomycetes</taxon>
        <taxon>Saccharomycetales</taxon>
        <taxon>Saccharomycetaceae</taxon>
        <taxon>Lachancea</taxon>
    </lineage>
</organism>
<accession>C5DBQ3</accession>
<proteinExistence type="inferred from homology"/>
<feature type="chain" id="PRO_0000402287" description="Respiratory growth induced protein 1">
    <location>
        <begin position="1"/>
        <end position="163"/>
    </location>
</feature>
<dbReference type="EMBL" id="CU928165">
    <property type="protein sequence ID" value="CAR21210.1"/>
    <property type="molecule type" value="Genomic_DNA"/>
</dbReference>
<dbReference type="RefSeq" id="XP_002551652.1">
    <property type="nucleotide sequence ID" value="XM_002551606.1"/>
</dbReference>
<dbReference type="SMR" id="C5DBQ3"/>
<dbReference type="FunCoup" id="C5DBQ3">
    <property type="interactions" value="118"/>
</dbReference>
<dbReference type="GeneID" id="8290456"/>
<dbReference type="KEGG" id="lth:KLTH0A04510g"/>
<dbReference type="eggNOG" id="ENOG502RZ9F">
    <property type="taxonomic scope" value="Eukaryota"/>
</dbReference>
<dbReference type="HOGENOM" id="CLU_118207_0_0_1"/>
<dbReference type="InParanoid" id="C5DBQ3"/>
<dbReference type="OMA" id="HLKYYPP"/>
<dbReference type="OrthoDB" id="4082176at2759"/>
<dbReference type="Proteomes" id="UP000002036">
    <property type="component" value="Chromosome A"/>
</dbReference>
<dbReference type="GO" id="GO:0005886">
    <property type="term" value="C:plasma membrane"/>
    <property type="evidence" value="ECO:0007669"/>
    <property type="project" value="UniProtKB-SubCell"/>
</dbReference>
<dbReference type="GO" id="GO:0006112">
    <property type="term" value="P:energy reserve metabolic process"/>
    <property type="evidence" value="ECO:0007669"/>
    <property type="project" value="InterPro"/>
</dbReference>
<dbReference type="Gene3D" id="3.40.1000.40">
    <property type="entry name" value="Respiratory growth induced protein 1"/>
    <property type="match status" value="1"/>
</dbReference>
<dbReference type="InterPro" id="IPR022554">
    <property type="entry name" value="RGI1"/>
</dbReference>
<dbReference type="InterPro" id="IPR038235">
    <property type="entry name" value="RGI1_sf"/>
</dbReference>
<dbReference type="Pfam" id="PF10843">
    <property type="entry name" value="RGI1"/>
    <property type="match status" value="1"/>
</dbReference>
<evidence type="ECO:0000250" key="1"/>
<evidence type="ECO:0000305" key="2"/>
<keyword id="KW-1003">Cell membrane</keyword>
<keyword id="KW-0472">Membrane</keyword>
<keyword id="KW-1185">Reference proteome</keyword>
<name>RGI1_LACTC</name>
<protein>
    <recommendedName>
        <fullName>Respiratory growth induced protein 1</fullName>
    </recommendedName>
</protein>
<sequence>MTKKDKKPKISTIVTKEGDTVKVFEDLDTFETFIKNETEDEEFDHVNCHLKYYPPFVLHESHEDPEKIKETVNSHNRKFVRHLHQHVEKHLLKDIRERLQLPQLKFNDKSKEETPDHIVWRYNQRANFHERDFDIHVTVECHHDSALVDVDYLTVPVPAVAAA</sequence>
<gene>
    <name type="primary">RGI1</name>
    <name type="ordered locus">KLTH0A04510g</name>
</gene>
<reference key="1">
    <citation type="journal article" date="2009" name="Genome Res.">
        <title>Comparative genomics of protoploid Saccharomycetaceae.</title>
        <authorList>
            <consortium name="The Genolevures Consortium"/>
            <person name="Souciet J.-L."/>
            <person name="Dujon B."/>
            <person name="Gaillardin C."/>
            <person name="Johnston M."/>
            <person name="Baret P.V."/>
            <person name="Cliften P."/>
            <person name="Sherman D.J."/>
            <person name="Weissenbach J."/>
            <person name="Westhof E."/>
            <person name="Wincker P."/>
            <person name="Jubin C."/>
            <person name="Poulain J."/>
            <person name="Barbe V."/>
            <person name="Segurens B."/>
            <person name="Artiguenave F."/>
            <person name="Anthouard V."/>
            <person name="Vacherie B."/>
            <person name="Val M.-E."/>
            <person name="Fulton R.S."/>
            <person name="Minx P."/>
            <person name="Wilson R."/>
            <person name="Durrens P."/>
            <person name="Jean G."/>
            <person name="Marck C."/>
            <person name="Martin T."/>
            <person name="Nikolski M."/>
            <person name="Rolland T."/>
            <person name="Seret M.-L."/>
            <person name="Casaregola S."/>
            <person name="Despons L."/>
            <person name="Fairhead C."/>
            <person name="Fischer G."/>
            <person name="Lafontaine I."/>
            <person name="Leh V."/>
            <person name="Lemaire M."/>
            <person name="de Montigny J."/>
            <person name="Neuveglise C."/>
            <person name="Thierry A."/>
            <person name="Blanc-Lenfle I."/>
            <person name="Bleykasten C."/>
            <person name="Diffels J."/>
            <person name="Fritsch E."/>
            <person name="Frangeul L."/>
            <person name="Goeffon A."/>
            <person name="Jauniaux N."/>
            <person name="Kachouri-Lafond R."/>
            <person name="Payen C."/>
            <person name="Potier S."/>
            <person name="Pribylova L."/>
            <person name="Ozanne C."/>
            <person name="Richard G.-F."/>
            <person name="Sacerdot C."/>
            <person name="Straub M.-L."/>
            <person name="Talla E."/>
        </authorList>
    </citation>
    <scope>NUCLEOTIDE SEQUENCE [LARGE SCALE GENOMIC DNA]</scope>
    <source>
        <strain>ATCC 56472 / CBS 6340 / NRRL Y-8284</strain>
    </source>
</reference>
<comment type="function">
    <text evidence="1">Involved in the control of energetic metabolism and significantly contribute to cell fitness, especially under respiratory growth conditions.</text>
</comment>
<comment type="subcellular location">
    <subcellularLocation>
        <location evidence="1">Cell membrane</location>
        <topology evidence="1">Peripheral membrane protein</topology>
    </subcellularLocation>
</comment>
<comment type="similarity">
    <text evidence="2">Belongs to the RGI1 family.</text>
</comment>